<dbReference type="EC" id="3.6.4.13"/>
<dbReference type="EMBL" id="AAHF01000002">
    <property type="protein sequence ID" value="EAL92492.1"/>
    <property type="molecule type" value="Genomic_DNA"/>
</dbReference>
<dbReference type="RefSeq" id="XP_754530.1">
    <property type="nucleotide sequence ID" value="XM_749437.1"/>
</dbReference>
<dbReference type="SMR" id="Q4WXW1"/>
<dbReference type="FunCoup" id="Q4WXW1">
    <property type="interactions" value="827"/>
</dbReference>
<dbReference type="STRING" id="330879.Q4WXW1"/>
<dbReference type="EnsemblFungi" id="EAL92492">
    <property type="protein sequence ID" value="EAL92492"/>
    <property type="gene ID" value="AFUA_3G10890"/>
</dbReference>
<dbReference type="GeneID" id="3511809"/>
<dbReference type="KEGG" id="afm:AFUA_3G10890"/>
<dbReference type="VEuPathDB" id="FungiDB:Afu3g10890"/>
<dbReference type="eggNOG" id="KOG0340">
    <property type="taxonomic scope" value="Eukaryota"/>
</dbReference>
<dbReference type="HOGENOM" id="CLU_003041_1_1_1"/>
<dbReference type="InParanoid" id="Q4WXW1"/>
<dbReference type="OMA" id="IMIFTDT"/>
<dbReference type="OrthoDB" id="10261904at2759"/>
<dbReference type="Proteomes" id="UP000002530">
    <property type="component" value="Chromosome 3"/>
</dbReference>
<dbReference type="GO" id="GO:0005730">
    <property type="term" value="C:nucleolus"/>
    <property type="evidence" value="ECO:0007669"/>
    <property type="project" value="UniProtKB-SubCell"/>
</dbReference>
<dbReference type="GO" id="GO:0005634">
    <property type="term" value="C:nucleus"/>
    <property type="evidence" value="ECO:0000318"/>
    <property type="project" value="GO_Central"/>
</dbReference>
<dbReference type="GO" id="GO:0005524">
    <property type="term" value="F:ATP binding"/>
    <property type="evidence" value="ECO:0007669"/>
    <property type="project" value="UniProtKB-KW"/>
</dbReference>
<dbReference type="GO" id="GO:0016887">
    <property type="term" value="F:ATP hydrolysis activity"/>
    <property type="evidence" value="ECO:0007669"/>
    <property type="project" value="RHEA"/>
</dbReference>
<dbReference type="GO" id="GO:0003723">
    <property type="term" value="F:RNA binding"/>
    <property type="evidence" value="ECO:0007669"/>
    <property type="project" value="UniProtKB-KW"/>
</dbReference>
<dbReference type="GO" id="GO:0003724">
    <property type="term" value="F:RNA helicase activity"/>
    <property type="evidence" value="ECO:0007669"/>
    <property type="project" value="UniProtKB-EC"/>
</dbReference>
<dbReference type="GO" id="GO:0006364">
    <property type="term" value="P:rRNA processing"/>
    <property type="evidence" value="ECO:0000318"/>
    <property type="project" value="GO_Central"/>
</dbReference>
<dbReference type="CDD" id="cd17955">
    <property type="entry name" value="DEADc_DDX49"/>
    <property type="match status" value="1"/>
</dbReference>
<dbReference type="CDD" id="cd18787">
    <property type="entry name" value="SF2_C_DEAD"/>
    <property type="match status" value="1"/>
</dbReference>
<dbReference type="Gene3D" id="3.40.50.300">
    <property type="entry name" value="P-loop containing nucleotide triphosphate hydrolases"/>
    <property type="match status" value="2"/>
</dbReference>
<dbReference type="InterPro" id="IPR011545">
    <property type="entry name" value="DEAD/DEAH_box_helicase_dom"/>
</dbReference>
<dbReference type="InterPro" id="IPR050079">
    <property type="entry name" value="DEAD_box_RNA_helicase"/>
</dbReference>
<dbReference type="InterPro" id="IPR014001">
    <property type="entry name" value="Helicase_ATP-bd"/>
</dbReference>
<dbReference type="InterPro" id="IPR001650">
    <property type="entry name" value="Helicase_C-like"/>
</dbReference>
<dbReference type="InterPro" id="IPR027417">
    <property type="entry name" value="P-loop_NTPase"/>
</dbReference>
<dbReference type="InterPro" id="IPR000629">
    <property type="entry name" value="RNA-helicase_DEAD-box_CS"/>
</dbReference>
<dbReference type="InterPro" id="IPR014014">
    <property type="entry name" value="RNA_helicase_DEAD_Q_motif"/>
</dbReference>
<dbReference type="PANTHER" id="PTHR47959:SF24">
    <property type="entry name" value="ATP-DEPENDENT RNA HELICASE"/>
    <property type="match status" value="1"/>
</dbReference>
<dbReference type="PANTHER" id="PTHR47959">
    <property type="entry name" value="ATP-DEPENDENT RNA HELICASE RHLE-RELATED"/>
    <property type="match status" value="1"/>
</dbReference>
<dbReference type="Pfam" id="PF00270">
    <property type="entry name" value="DEAD"/>
    <property type="match status" value="1"/>
</dbReference>
<dbReference type="Pfam" id="PF00271">
    <property type="entry name" value="Helicase_C"/>
    <property type="match status" value="1"/>
</dbReference>
<dbReference type="SMART" id="SM00487">
    <property type="entry name" value="DEXDc"/>
    <property type="match status" value="1"/>
</dbReference>
<dbReference type="SMART" id="SM00490">
    <property type="entry name" value="HELICc"/>
    <property type="match status" value="1"/>
</dbReference>
<dbReference type="SUPFAM" id="SSF52540">
    <property type="entry name" value="P-loop containing nucleoside triphosphate hydrolases"/>
    <property type="match status" value="1"/>
</dbReference>
<dbReference type="PROSITE" id="PS00039">
    <property type="entry name" value="DEAD_ATP_HELICASE"/>
    <property type="match status" value="1"/>
</dbReference>
<dbReference type="PROSITE" id="PS51192">
    <property type="entry name" value="HELICASE_ATP_BIND_1"/>
    <property type="match status" value="1"/>
</dbReference>
<dbReference type="PROSITE" id="PS51194">
    <property type="entry name" value="HELICASE_CTER"/>
    <property type="match status" value="1"/>
</dbReference>
<dbReference type="PROSITE" id="PS51195">
    <property type="entry name" value="Q_MOTIF"/>
    <property type="match status" value="1"/>
</dbReference>
<protein>
    <recommendedName>
        <fullName>ATP-dependent RNA helicase dbp8</fullName>
        <ecNumber>3.6.4.13</ecNumber>
    </recommendedName>
</protein>
<comment type="function">
    <text evidence="1">ATP-binding RNA helicase involved in 40S ribosomal subunit biogenesis and is required for the normal formation of 18S rRNAs through pre-rRNA processing at A0, A1 and A2 sites. Required for vegetative growth (By similarity).</text>
</comment>
<comment type="catalytic activity">
    <reaction>
        <text>ATP + H2O = ADP + phosphate + H(+)</text>
        <dbReference type="Rhea" id="RHEA:13065"/>
        <dbReference type="ChEBI" id="CHEBI:15377"/>
        <dbReference type="ChEBI" id="CHEBI:15378"/>
        <dbReference type="ChEBI" id="CHEBI:30616"/>
        <dbReference type="ChEBI" id="CHEBI:43474"/>
        <dbReference type="ChEBI" id="CHEBI:456216"/>
        <dbReference type="EC" id="3.6.4.13"/>
    </reaction>
</comment>
<comment type="subcellular location">
    <subcellularLocation>
        <location evidence="1">Nucleus</location>
        <location evidence="1">Nucleolus</location>
    </subcellularLocation>
</comment>
<comment type="domain">
    <text>The Q motif is unique to and characteristic of the DEAD box family of RNA helicases and controls ATP binding and hydrolysis.</text>
</comment>
<comment type="similarity">
    <text evidence="5">Belongs to the DEAD box helicase family. DDX49/DBP8 subfamily.</text>
</comment>
<reference key="1">
    <citation type="journal article" date="2005" name="Nature">
        <title>Genomic sequence of the pathogenic and allergenic filamentous fungus Aspergillus fumigatus.</title>
        <authorList>
            <person name="Nierman W.C."/>
            <person name="Pain A."/>
            <person name="Anderson M.J."/>
            <person name="Wortman J.R."/>
            <person name="Kim H.S."/>
            <person name="Arroyo J."/>
            <person name="Berriman M."/>
            <person name="Abe K."/>
            <person name="Archer D.B."/>
            <person name="Bermejo C."/>
            <person name="Bennett J.W."/>
            <person name="Bowyer P."/>
            <person name="Chen D."/>
            <person name="Collins M."/>
            <person name="Coulsen R."/>
            <person name="Davies R."/>
            <person name="Dyer P.S."/>
            <person name="Farman M.L."/>
            <person name="Fedorova N."/>
            <person name="Fedorova N.D."/>
            <person name="Feldblyum T.V."/>
            <person name="Fischer R."/>
            <person name="Fosker N."/>
            <person name="Fraser A."/>
            <person name="Garcia J.L."/>
            <person name="Garcia M.J."/>
            <person name="Goble A."/>
            <person name="Goldman G.H."/>
            <person name="Gomi K."/>
            <person name="Griffith-Jones S."/>
            <person name="Gwilliam R."/>
            <person name="Haas B.J."/>
            <person name="Haas H."/>
            <person name="Harris D.E."/>
            <person name="Horiuchi H."/>
            <person name="Huang J."/>
            <person name="Humphray S."/>
            <person name="Jimenez J."/>
            <person name="Keller N."/>
            <person name="Khouri H."/>
            <person name="Kitamoto K."/>
            <person name="Kobayashi T."/>
            <person name="Konzack S."/>
            <person name="Kulkarni R."/>
            <person name="Kumagai T."/>
            <person name="Lafton A."/>
            <person name="Latge J.-P."/>
            <person name="Li W."/>
            <person name="Lord A."/>
            <person name="Lu C."/>
            <person name="Majoros W.H."/>
            <person name="May G.S."/>
            <person name="Miller B.L."/>
            <person name="Mohamoud Y."/>
            <person name="Molina M."/>
            <person name="Monod M."/>
            <person name="Mouyna I."/>
            <person name="Mulligan S."/>
            <person name="Murphy L.D."/>
            <person name="O'Neil S."/>
            <person name="Paulsen I."/>
            <person name="Penalva M.A."/>
            <person name="Pertea M."/>
            <person name="Price C."/>
            <person name="Pritchard B.L."/>
            <person name="Quail M.A."/>
            <person name="Rabbinowitsch E."/>
            <person name="Rawlins N."/>
            <person name="Rajandream M.A."/>
            <person name="Reichard U."/>
            <person name="Renauld H."/>
            <person name="Robson G.D."/>
            <person name="Rodriguez de Cordoba S."/>
            <person name="Rodriguez-Pena J.M."/>
            <person name="Ronning C.M."/>
            <person name="Rutter S."/>
            <person name="Salzberg S.L."/>
            <person name="Sanchez M."/>
            <person name="Sanchez-Ferrero J.C."/>
            <person name="Saunders D."/>
            <person name="Seeger K."/>
            <person name="Squares R."/>
            <person name="Squares S."/>
            <person name="Takeuchi M."/>
            <person name="Tekaia F."/>
            <person name="Turner G."/>
            <person name="Vazquez de Aldana C.R."/>
            <person name="Weidman J."/>
            <person name="White O."/>
            <person name="Woodward J.R."/>
            <person name="Yu J.-H."/>
            <person name="Fraser C.M."/>
            <person name="Galagan J.E."/>
            <person name="Asai K."/>
            <person name="Machida M."/>
            <person name="Hall N."/>
            <person name="Barrell B.G."/>
            <person name="Denning D.W."/>
        </authorList>
    </citation>
    <scope>NUCLEOTIDE SEQUENCE [LARGE SCALE GENOMIC DNA]</scope>
    <source>
        <strain>ATCC MYA-4609 / CBS 101355 / FGSC A1100 / Af293</strain>
    </source>
</reference>
<accession>Q4WXW1</accession>
<feature type="chain" id="PRO_0000232281" description="ATP-dependent RNA helicase dbp8">
    <location>
        <begin position="1"/>
        <end position="526"/>
    </location>
</feature>
<feature type="domain" description="Helicase ATP-binding" evidence="2">
    <location>
        <begin position="127"/>
        <end position="306"/>
    </location>
</feature>
<feature type="domain" description="Helicase C-terminal" evidence="3">
    <location>
        <begin position="338"/>
        <end position="485"/>
    </location>
</feature>
<feature type="region of interest" description="Disordered" evidence="4">
    <location>
        <begin position="1"/>
        <end position="77"/>
    </location>
</feature>
<feature type="short sequence motif" description="Q motif">
    <location>
        <begin position="96"/>
        <end position="124"/>
    </location>
</feature>
<feature type="short sequence motif" description="DEAD box">
    <location>
        <begin position="249"/>
        <end position="252"/>
    </location>
</feature>
<feature type="compositionally biased region" description="Polar residues" evidence="4">
    <location>
        <begin position="17"/>
        <end position="31"/>
    </location>
</feature>
<feature type="binding site" evidence="2">
    <location>
        <begin position="140"/>
        <end position="147"/>
    </location>
    <ligand>
        <name>ATP</name>
        <dbReference type="ChEBI" id="CHEBI:30616"/>
    </ligand>
</feature>
<proteinExistence type="inferred from homology"/>
<organism>
    <name type="scientific">Aspergillus fumigatus (strain ATCC MYA-4609 / CBS 101355 / FGSC A1100 / Af293)</name>
    <name type="common">Neosartorya fumigata</name>
    <dbReference type="NCBI Taxonomy" id="330879"/>
    <lineage>
        <taxon>Eukaryota</taxon>
        <taxon>Fungi</taxon>
        <taxon>Dikarya</taxon>
        <taxon>Ascomycota</taxon>
        <taxon>Pezizomycotina</taxon>
        <taxon>Eurotiomycetes</taxon>
        <taxon>Eurotiomycetidae</taxon>
        <taxon>Eurotiales</taxon>
        <taxon>Aspergillaceae</taxon>
        <taxon>Aspergillus</taxon>
        <taxon>Aspergillus subgen. Fumigati</taxon>
    </lineage>
</organism>
<evidence type="ECO:0000250" key="1"/>
<evidence type="ECO:0000255" key="2">
    <source>
        <dbReference type="PROSITE-ProRule" id="PRU00541"/>
    </source>
</evidence>
<evidence type="ECO:0000255" key="3">
    <source>
        <dbReference type="PROSITE-ProRule" id="PRU00542"/>
    </source>
</evidence>
<evidence type="ECO:0000256" key="4">
    <source>
        <dbReference type="SAM" id="MobiDB-lite"/>
    </source>
</evidence>
<evidence type="ECO:0000305" key="5"/>
<keyword id="KW-0067">ATP-binding</keyword>
<keyword id="KW-0347">Helicase</keyword>
<keyword id="KW-0378">Hydrolase</keyword>
<keyword id="KW-0547">Nucleotide-binding</keyword>
<keyword id="KW-0539">Nucleus</keyword>
<keyword id="KW-1185">Reference proteome</keyword>
<keyword id="KW-0690">Ribosome biogenesis</keyword>
<keyword id="KW-0694">RNA-binding</keyword>
<keyword id="KW-0698">rRNA processing</keyword>
<gene>
    <name type="primary">dbp8</name>
    <name type="ORF">AFUA_3G10890</name>
</gene>
<name>DBP8_ASPFU</name>
<sequence>MTSPVPSEPVSEDTHDSSSGSEVEPSKTSTRAPKRRRLSESSDDSDDSYVAPAPLPTLSRIKKKGAPDAKPAAPAGQDNPVLIRDALEIGLREEASSFAALNVAPWLVGSLTTMAVRKPTAIQKACIPEILKGRDCIGGSRTGSGKTIAFSVPMLQKWAEDPFGIFGVVLTPTRELALQIFEQIKAISAPQSMKPVLITGGTDMRPQAIALAGRPHVVIATPGRLADHIKSSGEDTVCGLKRVRMVVLDEADRLLASGPGSMLPDVETCLSALPPSSERQTLLFTATVTPEVRALKNMPRSANKPPVFVTEISTENQGTIPPTLKQTYLKVPLTHREAFLHVLLSTEGNASKPAIVFCNHTKTADLLERMLRRLSHRVTSLHSLLPQSERNANLARFRASAARILVATDVASRGLDIPTVSLVINYDVPRNPDDYVHRVGRTARAGRRGEAVTLVGQRDVQLVLAIEERVGRQMEEWSEEGVSIEGRLVRTGALKEVGEAKREAMVEIDEGRDVLGRKRNKLKKVR</sequence>